<gene>
    <name type="ORF">ZK1098.3</name>
</gene>
<keyword id="KW-0269">Exonuclease</keyword>
<keyword id="KW-0378">Hydrolase</keyword>
<keyword id="KW-0540">Nuclease</keyword>
<keyword id="KW-1185">Reference proteome</keyword>
<name>YO63_CAEEL</name>
<evidence type="ECO:0000255" key="1"/>
<proteinExistence type="predicted"/>
<accession>P34603</accession>
<dbReference type="EMBL" id="Z22176">
    <property type="protein sequence ID" value="CAA80141.1"/>
    <property type="molecule type" value="Genomic_DNA"/>
</dbReference>
<dbReference type="PIR" id="C88558">
    <property type="entry name" value="C88558"/>
</dbReference>
<dbReference type="PIR" id="S40926">
    <property type="entry name" value="S40926"/>
</dbReference>
<dbReference type="RefSeq" id="NP_499104.1">
    <property type="nucleotide sequence ID" value="NM_066703.2"/>
</dbReference>
<dbReference type="SMR" id="P34603"/>
<dbReference type="FunCoup" id="P34603">
    <property type="interactions" value="1209"/>
</dbReference>
<dbReference type="STRING" id="6239.ZK1098.3.1"/>
<dbReference type="PaxDb" id="6239-ZK1098.3"/>
<dbReference type="PeptideAtlas" id="P34603"/>
<dbReference type="EnsemblMetazoa" id="ZK1098.3.1">
    <property type="protein sequence ID" value="ZK1098.3.1"/>
    <property type="gene ID" value="WBGene00014220"/>
</dbReference>
<dbReference type="GeneID" id="176346"/>
<dbReference type="KEGG" id="cel:CELE_ZK1098.3"/>
<dbReference type="UCSC" id="ZK1098.3">
    <property type="organism name" value="c. elegans"/>
</dbReference>
<dbReference type="AGR" id="WB:WBGene00014220"/>
<dbReference type="CTD" id="176346"/>
<dbReference type="WormBase" id="ZK1098.3">
    <property type="protein sequence ID" value="CE01108"/>
    <property type="gene ID" value="WBGene00014220"/>
</dbReference>
<dbReference type="eggNOG" id="KOG2207">
    <property type="taxonomic scope" value="Eukaryota"/>
</dbReference>
<dbReference type="GeneTree" id="ENSGT00390000006843"/>
<dbReference type="HOGENOM" id="CLU_354213_0_0_1"/>
<dbReference type="InParanoid" id="P34603"/>
<dbReference type="OMA" id="CSNWANR"/>
<dbReference type="OrthoDB" id="18193at2759"/>
<dbReference type="PhylomeDB" id="P34603"/>
<dbReference type="PRO" id="PR:P34603"/>
<dbReference type="Proteomes" id="UP000001940">
    <property type="component" value="Chromosome III"/>
</dbReference>
<dbReference type="Bgee" id="WBGene00014220">
    <property type="expression patterns" value="Expressed in germ line (C elegans) and 4 other cell types or tissues"/>
</dbReference>
<dbReference type="GO" id="GO:0005737">
    <property type="term" value="C:cytoplasm"/>
    <property type="evidence" value="ECO:0000318"/>
    <property type="project" value="GO_Central"/>
</dbReference>
<dbReference type="GO" id="GO:0005634">
    <property type="term" value="C:nucleus"/>
    <property type="evidence" value="ECO:0000318"/>
    <property type="project" value="GO_Central"/>
</dbReference>
<dbReference type="GO" id="GO:0008408">
    <property type="term" value="F:3'-5' exonuclease activity"/>
    <property type="evidence" value="ECO:0000318"/>
    <property type="project" value="GO_Central"/>
</dbReference>
<dbReference type="GO" id="GO:0003676">
    <property type="term" value="F:nucleic acid binding"/>
    <property type="evidence" value="ECO:0007669"/>
    <property type="project" value="InterPro"/>
</dbReference>
<dbReference type="GO" id="GO:0006139">
    <property type="term" value="P:nucleobase-containing compound metabolic process"/>
    <property type="evidence" value="ECO:0007669"/>
    <property type="project" value="InterPro"/>
</dbReference>
<dbReference type="CDD" id="cd06146">
    <property type="entry name" value="mut-7_like_exo"/>
    <property type="match status" value="1"/>
</dbReference>
<dbReference type="FunFam" id="3.30.420.10:FF:000244">
    <property type="entry name" value="Exonuclease mut-7"/>
    <property type="match status" value="1"/>
</dbReference>
<dbReference type="Gene3D" id="3.30.420.10">
    <property type="entry name" value="Ribonuclease H-like superfamily/Ribonuclease H"/>
    <property type="match status" value="1"/>
</dbReference>
<dbReference type="InterPro" id="IPR002562">
    <property type="entry name" value="3'-5'_exonuclease_dom"/>
</dbReference>
<dbReference type="InterPro" id="IPR052408">
    <property type="entry name" value="Exonuclease_MUT-7-like"/>
</dbReference>
<dbReference type="InterPro" id="IPR037432">
    <property type="entry name" value="Mut-7_DEDDy_dom"/>
</dbReference>
<dbReference type="InterPro" id="IPR012337">
    <property type="entry name" value="RNaseH-like_sf"/>
</dbReference>
<dbReference type="InterPro" id="IPR036397">
    <property type="entry name" value="RNaseH_sf"/>
</dbReference>
<dbReference type="PANTHER" id="PTHR47765">
    <property type="entry name" value="3'-5' EXONUCLEASE DOMAIN-CONTAINING PROTEIN"/>
    <property type="match status" value="1"/>
</dbReference>
<dbReference type="PANTHER" id="PTHR47765:SF2">
    <property type="entry name" value="EXONUCLEASE MUT-7 HOMOLOG"/>
    <property type="match status" value="1"/>
</dbReference>
<dbReference type="Pfam" id="PF01612">
    <property type="entry name" value="DNA_pol_A_exo1"/>
    <property type="match status" value="1"/>
</dbReference>
<dbReference type="SMART" id="SM00474">
    <property type="entry name" value="35EXOc"/>
    <property type="match status" value="1"/>
</dbReference>
<dbReference type="SUPFAM" id="SSF53098">
    <property type="entry name" value="Ribonuclease H-like"/>
    <property type="match status" value="1"/>
</dbReference>
<protein>
    <recommendedName>
        <fullName>Uncharacterized protein ZK1098.3</fullName>
    </recommendedName>
</protein>
<reference key="1">
    <citation type="journal article" date="1994" name="Nature">
        <title>2.2 Mb of contiguous nucleotide sequence from chromosome III of C. elegans.</title>
        <authorList>
            <person name="Wilson R."/>
            <person name="Ainscough R."/>
            <person name="Anderson K."/>
            <person name="Baynes C."/>
            <person name="Berks M."/>
            <person name="Bonfield J."/>
            <person name="Burton J."/>
            <person name="Connell M."/>
            <person name="Copsey T."/>
            <person name="Cooper J."/>
            <person name="Coulson A."/>
            <person name="Craxton M."/>
            <person name="Dear S."/>
            <person name="Du Z."/>
            <person name="Durbin R."/>
            <person name="Favello A."/>
            <person name="Fraser A."/>
            <person name="Fulton L."/>
            <person name="Gardner A."/>
            <person name="Green P."/>
            <person name="Hawkins T."/>
            <person name="Hillier L."/>
            <person name="Jier M."/>
            <person name="Johnston L."/>
            <person name="Jones M."/>
            <person name="Kershaw J."/>
            <person name="Kirsten J."/>
            <person name="Laisster N."/>
            <person name="Latreille P."/>
            <person name="Lightning J."/>
            <person name="Lloyd C."/>
            <person name="Mortimore B."/>
            <person name="O'Callaghan M."/>
            <person name="Parsons J."/>
            <person name="Percy C."/>
            <person name="Rifken L."/>
            <person name="Roopra A."/>
            <person name="Saunders D."/>
            <person name="Shownkeen R."/>
            <person name="Sims M."/>
            <person name="Smaldon N."/>
            <person name="Smith A."/>
            <person name="Smith M."/>
            <person name="Sonnhammer E."/>
            <person name="Staden R."/>
            <person name="Sulston J."/>
            <person name="Thierry-Mieg J."/>
            <person name="Thomas K."/>
            <person name="Vaudin M."/>
            <person name="Vaughan K."/>
            <person name="Waterston R."/>
            <person name="Watson A."/>
            <person name="Weinstock L."/>
            <person name="Wilkinson-Sproat J."/>
            <person name="Wohldman P."/>
        </authorList>
    </citation>
    <scope>NUCLEOTIDE SEQUENCE [LARGE SCALE GENOMIC DNA]</scope>
    <source>
        <strain>Bristol N2</strain>
    </source>
</reference>
<reference key="2">
    <citation type="journal article" date="1998" name="Science">
        <title>Genome sequence of the nematode C. elegans: a platform for investigating biology.</title>
        <authorList>
            <consortium name="The C. elegans sequencing consortium"/>
        </authorList>
    </citation>
    <scope>NUCLEOTIDE SEQUENCE [LARGE SCALE GENOMIC DNA]</scope>
    <source>
        <strain>Bristol N2</strain>
    </source>
</reference>
<feature type="chain" id="PRO_0000065557" description="Uncharacterized protein ZK1098.3">
    <location>
        <begin position="1"/>
        <end position="784"/>
    </location>
</feature>
<feature type="domain" description="3'-5' exonuclease" evidence="1">
    <location>
        <begin position="422"/>
        <end position="619"/>
    </location>
</feature>
<organism>
    <name type="scientific">Caenorhabditis elegans</name>
    <dbReference type="NCBI Taxonomy" id="6239"/>
    <lineage>
        <taxon>Eukaryota</taxon>
        <taxon>Metazoa</taxon>
        <taxon>Ecdysozoa</taxon>
        <taxon>Nematoda</taxon>
        <taxon>Chromadorea</taxon>
        <taxon>Rhabditida</taxon>
        <taxon>Rhabditina</taxon>
        <taxon>Rhabditomorpha</taxon>
        <taxon>Rhabditoidea</taxon>
        <taxon>Rhabditidae</taxon>
        <taxon>Peloderinae</taxon>
        <taxon>Caenorhabditis</taxon>
    </lineage>
</organism>
<sequence length="784" mass="92135">MGDTTSSEDVPENKQKSLKFEIIDARMKIFKDIVKSKSSESVKEEQIYQKSLEFFDEDLKSSEESVSNEEIKTGSEKELEPLNVFDIILIMLQQLPERKKPIGSLLSKWILMNFMNWMQDKQSIMEQQMTEYYQKKAGLACVKEPKNEEYLLQIFKISKEFVIDLRKSKVQEYLENQKFKEAAEIVMKHEVVDDYSFEQITLPLILCDKVQIVDELLKISKKLQKSYISFLDQFVAETDETVNAFFEPYKEKGMVTINLSRFHGKSLTIFMQKFFNGQVKQFKFDLEERRDAPKFVANMKRKALKYFVGKRFEDHEMNDELFCEHMKSTLPECTDKTIVQFLILLWDTCIYERRIEALFWATYSNIDRNSKYMPPDLKEELENPTTEMKNGLEKLQALRTTKNCQEEDEQLYVFEEQKKYPIRIVQNEQDLEILLSELGELEEGMYIGYDSEFKPYHLIDVSTSRLAIIQLFFKDKAWLINCVAIDNLASRDDVWIRLYKGLFESNKFSIVGFDIRQDIEAMFTVPSINKNFKIENIQNVICVKSLAENVNALSMDILNLSTKTSKLSVLADHLVGLKMDKSEQCGNWQCRPLRRNQIIYAVMDAVAVFEVFQKIVEVVRKHELDAEKLLVESHMITVKKEKVRRDCKNISLIPWNEFYQIIHTHRNPEKPLQKPSELKIVVDTMVLGLGKNLRLLGFDVYIPRDVTELKEFLRKMDKMEESEQRLVISVPSRSYEMLKSDNPNAKFVLIPNIYEKVPIDLVCSFFDFFNIDISPDQDYIKLNC</sequence>